<comment type="similarity">
    <text evidence="1">Belongs to the UPF0178 family.</text>
</comment>
<sequence>MKIWVDADACPVVIKEILFKAADRTKIAITLVANHHVRIPPSPFISFMQVSSGFDVADDEIVKRIEANDLVITSDIPLADEVIDKSGIALSPRGELYTKENIKSRLNIRDFMDTMRASGVHTGGPPALNQTDRQNFANHLDRIITQFKKTQ</sequence>
<dbReference type="EMBL" id="CP000083">
    <property type="protein sequence ID" value="AAZ24375.1"/>
    <property type="molecule type" value="Genomic_DNA"/>
</dbReference>
<dbReference type="RefSeq" id="WP_011044338.1">
    <property type="nucleotide sequence ID" value="NC_003910.7"/>
</dbReference>
<dbReference type="KEGG" id="cps:CPS_3584"/>
<dbReference type="eggNOG" id="COG1671">
    <property type="taxonomic scope" value="Bacteria"/>
</dbReference>
<dbReference type="HOGENOM" id="CLU_106619_2_1_6"/>
<dbReference type="Proteomes" id="UP000000547">
    <property type="component" value="Chromosome"/>
</dbReference>
<dbReference type="CDD" id="cd18720">
    <property type="entry name" value="PIN_YqxD-like"/>
    <property type="match status" value="1"/>
</dbReference>
<dbReference type="HAMAP" id="MF_00489">
    <property type="entry name" value="UPF0178"/>
    <property type="match status" value="1"/>
</dbReference>
<dbReference type="InterPro" id="IPR003791">
    <property type="entry name" value="UPF0178"/>
</dbReference>
<dbReference type="NCBIfam" id="NF001095">
    <property type="entry name" value="PRK00124.1"/>
    <property type="match status" value="1"/>
</dbReference>
<dbReference type="PANTHER" id="PTHR35146">
    <property type="entry name" value="UPF0178 PROTEIN YAII"/>
    <property type="match status" value="1"/>
</dbReference>
<dbReference type="PANTHER" id="PTHR35146:SF1">
    <property type="entry name" value="UPF0178 PROTEIN YAII"/>
    <property type="match status" value="1"/>
</dbReference>
<dbReference type="Pfam" id="PF02639">
    <property type="entry name" value="DUF188"/>
    <property type="match status" value="1"/>
</dbReference>
<name>Y3584_COLP3</name>
<proteinExistence type="inferred from homology"/>
<feature type="chain" id="PRO_0000241811" description="UPF0178 protein CPS_3584">
    <location>
        <begin position="1"/>
        <end position="151"/>
    </location>
</feature>
<reference key="1">
    <citation type="journal article" date="2005" name="Proc. Natl. Acad. Sci. U.S.A.">
        <title>The psychrophilic lifestyle as revealed by the genome sequence of Colwellia psychrerythraea 34H through genomic and proteomic analyses.</title>
        <authorList>
            <person name="Methe B.A."/>
            <person name="Nelson K.E."/>
            <person name="Deming J.W."/>
            <person name="Momen B."/>
            <person name="Melamud E."/>
            <person name="Zhang X."/>
            <person name="Moult J."/>
            <person name="Madupu R."/>
            <person name="Nelson W.C."/>
            <person name="Dodson R.J."/>
            <person name="Brinkac L.M."/>
            <person name="Daugherty S.C."/>
            <person name="Durkin A.S."/>
            <person name="DeBoy R.T."/>
            <person name="Kolonay J.F."/>
            <person name="Sullivan S.A."/>
            <person name="Zhou L."/>
            <person name="Davidsen T.M."/>
            <person name="Wu M."/>
            <person name="Huston A.L."/>
            <person name="Lewis M."/>
            <person name="Weaver B."/>
            <person name="Weidman J.F."/>
            <person name="Khouri H."/>
            <person name="Utterback T.R."/>
            <person name="Feldblyum T.V."/>
            <person name="Fraser C.M."/>
        </authorList>
    </citation>
    <scope>NUCLEOTIDE SEQUENCE [LARGE SCALE GENOMIC DNA]</scope>
    <source>
        <strain>34H / ATCC BAA-681</strain>
    </source>
</reference>
<evidence type="ECO:0000255" key="1">
    <source>
        <dbReference type="HAMAP-Rule" id="MF_00489"/>
    </source>
</evidence>
<gene>
    <name type="ordered locus">CPS_3584</name>
</gene>
<organism>
    <name type="scientific">Colwellia psychrerythraea (strain 34H / ATCC BAA-681)</name>
    <name type="common">Vibrio psychroerythus</name>
    <dbReference type="NCBI Taxonomy" id="167879"/>
    <lineage>
        <taxon>Bacteria</taxon>
        <taxon>Pseudomonadati</taxon>
        <taxon>Pseudomonadota</taxon>
        <taxon>Gammaproteobacteria</taxon>
        <taxon>Alteromonadales</taxon>
        <taxon>Colwelliaceae</taxon>
        <taxon>Colwellia</taxon>
    </lineage>
</organism>
<accession>Q47Y68</accession>
<protein>
    <recommendedName>
        <fullName evidence="1">UPF0178 protein CPS_3584</fullName>
    </recommendedName>
</protein>